<accession>Q0G9L0</accession>
<gene>
    <name evidence="2" type="primary">accD</name>
</gene>
<name>ACCD_LIRTU</name>
<protein>
    <recommendedName>
        <fullName evidence="2">Acetyl-coenzyme A carboxylase carboxyl transferase subunit beta, chloroplastic</fullName>
        <shortName evidence="2">ACCase subunit beta</shortName>
        <shortName evidence="2">Acetyl-CoA carboxylase carboxyltransferase subunit beta</shortName>
        <ecNumber evidence="2">2.1.3.15</ecNumber>
    </recommendedName>
</protein>
<comment type="function">
    <text evidence="2">Component of the acetyl coenzyme A carboxylase (ACC) complex. Biotin carboxylase (BC) catalyzes the carboxylation of biotin on its carrier protein (BCCP) and then the CO(2) group is transferred by the transcarboxylase to acetyl-CoA to form malonyl-CoA.</text>
</comment>
<comment type="catalytic activity">
    <reaction evidence="2">
        <text>N(6)-carboxybiotinyl-L-lysyl-[protein] + acetyl-CoA = N(6)-biotinyl-L-lysyl-[protein] + malonyl-CoA</text>
        <dbReference type="Rhea" id="RHEA:54728"/>
        <dbReference type="Rhea" id="RHEA-COMP:10505"/>
        <dbReference type="Rhea" id="RHEA-COMP:10506"/>
        <dbReference type="ChEBI" id="CHEBI:57288"/>
        <dbReference type="ChEBI" id="CHEBI:57384"/>
        <dbReference type="ChEBI" id="CHEBI:83144"/>
        <dbReference type="ChEBI" id="CHEBI:83145"/>
        <dbReference type="EC" id="2.1.3.15"/>
    </reaction>
</comment>
<comment type="cofactor">
    <cofactor evidence="2">
        <name>Zn(2+)</name>
        <dbReference type="ChEBI" id="CHEBI:29105"/>
    </cofactor>
    <text evidence="2">Binds 1 zinc ion per subunit.</text>
</comment>
<comment type="pathway">
    <text evidence="2">Lipid metabolism; malonyl-CoA biosynthesis; malonyl-CoA from acetyl-CoA: step 1/1.</text>
</comment>
<comment type="subunit">
    <text evidence="1">Acetyl-CoA carboxylase is a heterohexamer composed of biotin carboxyl carrier protein, biotin carboxylase and 2 subunits each of ACCase subunit alpha and ACCase plastid-coded subunit beta (accD).</text>
</comment>
<comment type="subcellular location">
    <subcellularLocation>
        <location evidence="2">Plastid</location>
        <location evidence="2">Chloroplast stroma</location>
    </subcellularLocation>
</comment>
<comment type="similarity">
    <text evidence="2">Belongs to the AccD/PCCB family.</text>
</comment>
<reference key="1">
    <citation type="journal article" date="2006" name="BMC Evol. Biol.">
        <title>Complete plastid genome sequences of Drimys, Liriodendron, and Piper: implications for the phylogenetic relationships of magnoliids.</title>
        <authorList>
            <person name="Cai Z."/>
            <person name="Penaflor C."/>
            <person name="Kuehl J.V."/>
            <person name="Leebens-Mack J."/>
            <person name="Carlson J.E."/>
            <person name="dePamphilis C.W."/>
            <person name="Boore J.L."/>
            <person name="Jansen R.K."/>
        </authorList>
    </citation>
    <scope>NUCLEOTIDE SEQUENCE [LARGE SCALE GENOMIC DNA]</scope>
</reference>
<geneLocation type="chloroplast"/>
<feature type="chain" id="PRO_0000359149" description="Acetyl-coenzyme A carboxylase carboxyl transferase subunit beta, chloroplastic">
    <location>
        <begin position="1"/>
        <end position="488"/>
    </location>
</feature>
<feature type="domain" description="CoA carboxyltransferase N-terminal" evidence="3">
    <location>
        <begin position="224"/>
        <end position="488"/>
    </location>
</feature>
<feature type="zinc finger region" description="C4-type" evidence="2">
    <location>
        <begin position="228"/>
        <end position="250"/>
    </location>
</feature>
<feature type="region of interest" description="Disordered" evidence="4">
    <location>
        <begin position="189"/>
        <end position="211"/>
    </location>
</feature>
<feature type="binding site" evidence="2">
    <location>
        <position position="228"/>
    </location>
    <ligand>
        <name>Zn(2+)</name>
        <dbReference type="ChEBI" id="CHEBI:29105"/>
    </ligand>
</feature>
<feature type="binding site" evidence="2">
    <location>
        <position position="231"/>
    </location>
    <ligand>
        <name>Zn(2+)</name>
        <dbReference type="ChEBI" id="CHEBI:29105"/>
    </ligand>
</feature>
<feature type="binding site" evidence="2">
    <location>
        <position position="247"/>
    </location>
    <ligand>
        <name>Zn(2+)</name>
        <dbReference type="ChEBI" id="CHEBI:29105"/>
    </ligand>
</feature>
<feature type="binding site" evidence="2">
    <location>
        <position position="250"/>
    </location>
    <ligand>
        <name>Zn(2+)</name>
        <dbReference type="ChEBI" id="CHEBI:29105"/>
    </ligand>
</feature>
<proteinExistence type="inferred from homology"/>
<sequence>MEKWWFNSMLSNEELEHRCGLSKSMDSLGCPIGNTSGSEDPIINDTDKNIHSWNDSGSYSCSNVDHFLGVRDIWSFISDETFLVRDSNGNSYSVYFDIENHIFEIDNDSSFLSELESSFSSYLNNGSKSDNRYYDCDMYDTKYSWNNHINSCIDSYLRSEISIDSYISSGSDNCSDSYIYSYICSGESISGSDSGSSNIRTDGNGSDIRGRSNDFDINQKYRHLWVQCENCYGLNYKKFFKSKMNICEQCGYHLKMSSSDRIELSIDPGTWDPMDEDMVSIDPIEFHSEEEPYRDRIDSYQRKTGLTEAVQTGIGQLNGIPIAIGVMDFEFMGGSMGSVVGEKITRLIEYATNRSLPVIMVCASGGARMQEGSLSLMQMAKISSALYDYQSNKKLFYVSILTSPTTGGVTASFGMLGDIIIAEPNAYIAFAGKRVIEQTLNKTVPDGSQAAEYSFHKGLFDPIVPRNLLKGVLSELFQLHGFFPLTQN</sequence>
<organism>
    <name type="scientific">Liriodendron tulipifera</name>
    <name type="common">Tuliptree</name>
    <name type="synonym">Tulip poplar</name>
    <dbReference type="NCBI Taxonomy" id="3415"/>
    <lineage>
        <taxon>Eukaryota</taxon>
        <taxon>Viridiplantae</taxon>
        <taxon>Streptophyta</taxon>
        <taxon>Embryophyta</taxon>
        <taxon>Tracheophyta</taxon>
        <taxon>Spermatophyta</taxon>
        <taxon>Magnoliopsida</taxon>
        <taxon>Magnoliidae</taxon>
        <taxon>Magnoliales</taxon>
        <taxon>Magnoliaceae</taxon>
        <taxon>Liriodendron</taxon>
    </lineage>
</organism>
<keyword id="KW-0067">ATP-binding</keyword>
<keyword id="KW-0150">Chloroplast</keyword>
<keyword id="KW-0275">Fatty acid biosynthesis</keyword>
<keyword id="KW-0276">Fatty acid metabolism</keyword>
<keyword id="KW-0444">Lipid biosynthesis</keyword>
<keyword id="KW-0443">Lipid metabolism</keyword>
<keyword id="KW-0479">Metal-binding</keyword>
<keyword id="KW-0547">Nucleotide-binding</keyword>
<keyword id="KW-0934">Plastid</keyword>
<keyword id="KW-0808">Transferase</keyword>
<keyword id="KW-0862">Zinc</keyword>
<keyword id="KW-0863">Zinc-finger</keyword>
<evidence type="ECO:0000250" key="1"/>
<evidence type="ECO:0000255" key="2">
    <source>
        <dbReference type="HAMAP-Rule" id="MF_01395"/>
    </source>
</evidence>
<evidence type="ECO:0000255" key="3">
    <source>
        <dbReference type="PROSITE-ProRule" id="PRU01136"/>
    </source>
</evidence>
<evidence type="ECO:0000256" key="4">
    <source>
        <dbReference type="SAM" id="MobiDB-lite"/>
    </source>
</evidence>
<dbReference type="EC" id="2.1.3.15" evidence="2"/>
<dbReference type="EMBL" id="DQ899947">
    <property type="protein sequence ID" value="ABI32518.1"/>
    <property type="molecule type" value="Genomic_DNA"/>
</dbReference>
<dbReference type="RefSeq" id="YP_740211.1">
    <property type="nucleotide sequence ID" value="NC_008326.1"/>
</dbReference>
<dbReference type="SMR" id="Q0G9L0"/>
<dbReference type="GeneID" id="4266633"/>
<dbReference type="UniPathway" id="UPA00655">
    <property type="reaction ID" value="UER00711"/>
</dbReference>
<dbReference type="GO" id="GO:0009317">
    <property type="term" value="C:acetyl-CoA carboxylase complex"/>
    <property type="evidence" value="ECO:0007669"/>
    <property type="project" value="InterPro"/>
</dbReference>
<dbReference type="GO" id="GO:0009570">
    <property type="term" value="C:chloroplast stroma"/>
    <property type="evidence" value="ECO:0007669"/>
    <property type="project" value="UniProtKB-SubCell"/>
</dbReference>
<dbReference type="GO" id="GO:0003989">
    <property type="term" value="F:acetyl-CoA carboxylase activity"/>
    <property type="evidence" value="ECO:0007669"/>
    <property type="project" value="InterPro"/>
</dbReference>
<dbReference type="GO" id="GO:0005524">
    <property type="term" value="F:ATP binding"/>
    <property type="evidence" value="ECO:0007669"/>
    <property type="project" value="UniProtKB-KW"/>
</dbReference>
<dbReference type="GO" id="GO:0016743">
    <property type="term" value="F:carboxyl- or carbamoyltransferase activity"/>
    <property type="evidence" value="ECO:0007669"/>
    <property type="project" value="UniProtKB-UniRule"/>
</dbReference>
<dbReference type="GO" id="GO:0008270">
    <property type="term" value="F:zinc ion binding"/>
    <property type="evidence" value="ECO:0007669"/>
    <property type="project" value="UniProtKB-UniRule"/>
</dbReference>
<dbReference type="GO" id="GO:0006633">
    <property type="term" value="P:fatty acid biosynthetic process"/>
    <property type="evidence" value="ECO:0007669"/>
    <property type="project" value="UniProtKB-KW"/>
</dbReference>
<dbReference type="GO" id="GO:2001295">
    <property type="term" value="P:malonyl-CoA biosynthetic process"/>
    <property type="evidence" value="ECO:0007669"/>
    <property type="project" value="UniProtKB-UniRule"/>
</dbReference>
<dbReference type="Gene3D" id="3.90.226.10">
    <property type="entry name" value="2-enoyl-CoA Hydratase, Chain A, domain 1"/>
    <property type="match status" value="1"/>
</dbReference>
<dbReference type="HAMAP" id="MF_01395">
    <property type="entry name" value="AcetylCoA_CT_beta"/>
    <property type="match status" value="1"/>
</dbReference>
<dbReference type="InterPro" id="IPR034733">
    <property type="entry name" value="AcCoA_carboxyl_beta"/>
</dbReference>
<dbReference type="InterPro" id="IPR000438">
    <property type="entry name" value="Acetyl_CoA_COase_Trfase_b_su"/>
</dbReference>
<dbReference type="InterPro" id="IPR029045">
    <property type="entry name" value="ClpP/crotonase-like_dom_sf"/>
</dbReference>
<dbReference type="InterPro" id="IPR011762">
    <property type="entry name" value="COA_CT_N"/>
</dbReference>
<dbReference type="NCBIfam" id="TIGR00515">
    <property type="entry name" value="accD"/>
    <property type="match status" value="1"/>
</dbReference>
<dbReference type="PANTHER" id="PTHR42995">
    <property type="entry name" value="ACETYL-COENZYME A CARBOXYLASE CARBOXYL TRANSFERASE SUBUNIT BETA, CHLOROPLASTIC"/>
    <property type="match status" value="1"/>
</dbReference>
<dbReference type="PANTHER" id="PTHR42995:SF5">
    <property type="entry name" value="ACETYL-COENZYME A CARBOXYLASE CARBOXYL TRANSFERASE SUBUNIT BETA, CHLOROPLASTIC"/>
    <property type="match status" value="1"/>
</dbReference>
<dbReference type="Pfam" id="PF01039">
    <property type="entry name" value="Carboxyl_trans"/>
    <property type="match status" value="1"/>
</dbReference>
<dbReference type="PRINTS" id="PR01070">
    <property type="entry name" value="ACCCTRFRASEB"/>
</dbReference>
<dbReference type="SUPFAM" id="SSF52096">
    <property type="entry name" value="ClpP/crotonase"/>
    <property type="match status" value="1"/>
</dbReference>
<dbReference type="PROSITE" id="PS50980">
    <property type="entry name" value="COA_CT_NTER"/>
    <property type="match status" value="1"/>
</dbReference>